<feature type="signal peptide" evidence="1">
    <location>
        <begin position="1"/>
        <end position="26"/>
    </location>
</feature>
<feature type="chain" id="PRO_0000020781" description="BMP and activin membrane-bound inhibitor homolog">
    <location>
        <begin position="27"/>
        <end position="260"/>
    </location>
</feature>
<feature type="topological domain" description="Extracellular" evidence="1">
    <location>
        <begin position="27"/>
        <end position="152"/>
    </location>
</feature>
<feature type="transmembrane region" description="Helical" evidence="1">
    <location>
        <begin position="153"/>
        <end position="173"/>
    </location>
</feature>
<feature type="topological domain" description="Cytoplasmic" evidence="1">
    <location>
        <begin position="174"/>
        <end position="260"/>
    </location>
</feature>
<feature type="glycosylation site" description="N-linked (GlcNAc...) asparagine" evidence="1">
    <location>
        <position position="87"/>
    </location>
</feature>
<comment type="function">
    <text>Negatively regulates TGF-beta signaling.</text>
</comment>
<comment type="subcellular location">
    <subcellularLocation>
        <location evidence="3">Membrane</location>
        <topology evidence="3">Single-pass type I membrane protein</topology>
    </subcellularLocation>
</comment>
<comment type="tissue specificity">
    <text evidence="2">Detected in granulosa and thecal cells of adult ovaries and in spermatogonia, spermatocytes, round spermatids, and Sertoli cells of adult testes.</text>
</comment>
<comment type="similarity">
    <text evidence="3">Belongs to the BAMBI family.</text>
</comment>
<name>BAMBI_RAT</name>
<protein>
    <recommendedName>
        <fullName>BMP and activin membrane-bound inhibitor homolog</fullName>
    </recommendedName>
    <alternativeName>
        <fullName>Kinase-deficient TGFbeta superfamily receptor subunit</fullName>
    </alternativeName>
</protein>
<sequence>MDRHSSYIFIWLQLELCAMAVLLTKGEIRCYCDAAHCVATGYMCKSELSACFSRLLDPQNTNSPLTHGCLDSLASTADICRAKQAQNHSGPTMPTLECCHEDMCNYRGLHDVLSPPKSEASGQGNRYQHDSSRNLITKVQELTSSKELWFRAAVIAVPIAGGLILVLLIMLALRMLRSENKRLQDQRQQMLSRLHYSFHGHHSKKGQVAKLDLECMVPVSGQENCCLTCDKMRQADLSNEKILSLVHWGMYSGHGKLEFV</sequence>
<dbReference type="EMBL" id="AF387513">
    <property type="protein sequence ID" value="AAK67353.1"/>
    <property type="molecule type" value="mRNA"/>
</dbReference>
<dbReference type="EMBL" id="BC070516">
    <property type="protein sequence ID" value="AAH70516.1"/>
    <property type="molecule type" value="mRNA"/>
</dbReference>
<dbReference type="RefSeq" id="NP_620782.1">
    <property type="nucleotide sequence ID" value="NM_139082.3"/>
</dbReference>
<dbReference type="FunCoup" id="Q91XN4">
    <property type="interactions" value="672"/>
</dbReference>
<dbReference type="STRING" id="10116.ENSRNOP00000021801"/>
<dbReference type="GlyCosmos" id="Q91XN4">
    <property type="glycosylation" value="1 site, No reported glycans"/>
</dbReference>
<dbReference type="GlyGen" id="Q91XN4">
    <property type="glycosylation" value="1 site"/>
</dbReference>
<dbReference type="PhosphoSitePlus" id="Q91XN4"/>
<dbReference type="PaxDb" id="10116-ENSRNOP00000021801"/>
<dbReference type="Ensembl" id="ENSRNOT00000021801.6">
    <property type="protein sequence ID" value="ENSRNOP00000021801.3"/>
    <property type="gene ID" value="ENSRNOG00000016066.6"/>
</dbReference>
<dbReference type="GeneID" id="83837"/>
<dbReference type="KEGG" id="rno:83837"/>
<dbReference type="UCSC" id="RGD:621831">
    <property type="organism name" value="rat"/>
</dbReference>
<dbReference type="AGR" id="RGD:621831"/>
<dbReference type="CTD" id="25805"/>
<dbReference type="RGD" id="621831">
    <property type="gene designation" value="Bambi"/>
</dbReference>
<dbReference type="eggNOG" id="ENOG502QXJJ">
    <property type="taxonomic scope" value="Eukaryota"/>
</dbReference>
<dbReference type="GeneTree" id="ENSGT00940000154101"/>
<dbReference type="HOGENOM" id="CLU_093515_0_0_1"/>
<dbReference type="InParanoid" id="Q91XN4"/>
<dbReference type="OMA" id="TVECCHE"/>
<dbReference type="OrthoDB" id="5914644at2759"/>
<dbReference type="PhylomeDB" id="Q91XN4"/>
<dbReference type="TreeFam" id="TF333466"/>
<dbReference type="Reactome" id="R-RNO-2173788">
    <property type="pathway name" value="Downregulation of TGF-beta receptor signaling"/>
</dbReference>
<dbReference type="PRO" id="PR:Q91XN4"/>
<dbReference type="Proteomes" id="UP000002494">
    <property type="component" value="Chromosome 17"/>
</dbReference>
<dbReference type="Bgee" id="ENSRNOG00000016066">
    <property type="expression patterns" value="Expressed in ovary and 19 other cell types or tissues"/>
</dbReference>
<dbReference type="GO" id="GO:0005737">
    <property type="term" value="C:cytoplasm"/>
    <property type="evidence" value="ECO:0000266"/>
    <property type="project" value="RGD"/>
</dbReference>
<dbReference type="GO" id="GO:0005886">
    <property type="term" value="C:plasma membrane"/>
    <property type="evidence" value="ECO:0000266"/>
    <property type="project" value="RGD"/>
</dbReference>
<dbReference type="GO" id="GO:0005109">
    <property type="term" value="F:frizzled binding"/>
    <property type="evidence" value="ECO:0000266"/>
    <property type="project" value="RGD"/>
</dbReference>
<dbReference type="GO" id="GO:0016477">
    <property type="term" value="P:cell migration"/>
    <property type="evidence" value="ECO:0000266"/>
    <property type="project" value="RGD"/>
</dbReference>
<dbReference type="GO" id="GO:0030514">
    <property type="term" value="P:negative regulation of BMP signaling pathway"/>
    <property type="evidence" value="ECO:0000266"/>
    <property type="project" value="RGD"/>
</dbReference>
<dbReference type="GO" id="GO:0045668">
    <property type="term" value="P:negative regulation of osteoblast differentiation"/>
    <property type="evidence" value="ECO:0000266"/>
    <property type="project" value="RGD"/>
</dbReference>
<dbReference type="GO" id="GO:0030512">
    <property type="term" value="P:negative regulation of transforming growth factor beta receptor signaling pathway"/>
    <property type="evidence" value="ECO:0000266"/>
    <property type="project" value="RGD"/>
</dbReference>
<dbReference type="GO" id="GO:0090263">
    <property type="term" value="P:positive regulation of canonical Wnt signaling pathway"/>
    <property type="evidence" value="ECO:0000266"/>
    <property type="project" value="RGD"/>
</dbReference>
<dbReference type="GO" id="GO:0008284">
    <property type="term" value="P:positive regulation of cell population proliferation"/>
    <property type="evidence" value="ECO:0000266"/>
    <property type="project" value="RGD"/>
</dbReference>
<dbReference type="GO" id="GO:0045893">
    <property type="term" value="P:positive regulation of DNA-templated transcription"/>
    <property type="evidence" value="ECO:0000266"/>
    <property type="project" value="RGD"/>
</dbReference>
<dbReference type="GO" id="GO:0010718">
    <property type="term" value="P:positive regulation of epithelial to mesenchymal transition"/>
    <property type="evidence" value="ECO:0000266"/>
    <property type="project" value="RGD"/>
</dbReference>
<dbReference type="GO" id="GO:0008360">
    <property type="term" value="P:regulation of cell shape"/>
    <property type="evidence" value="ECO:0000266"/>
    <property type="project" value="RGD"/>
</dbReference>
<dbReference type="GO" id="GO:0007179">
    <property type="term" value="P:transforming growth factor beta receptor signaling pathway"/>
    <property type="evidence" value="ECO:0000270"/>
    <property type="project" value="RGD"/>
</dbReference>
<dbReference type="CDD" id="cd23576">
    <property type="entry name" value="TFP_LU_ECD_BAMBI"/>
    <property type="match status" value="1"/>
</dbReference>
<dbReference type="FunFam" id="2.10.60.10:FF:000018">
    <property type="entry name" value="BMP and activin membrane-bound inhibitor homolog"/>
    <property type="match status" value="1"/>
</dbReference>
<dbReference type="Gene3D" id="2.10.60.10">
    <property type="entry name" value="CD59"/>
    <property type="match status" value="1"/>
</dbReference>
<dbReference type="InterPro" id="IPR009345">
    <property type="entry name" value="BAMBI"/>
</dbReference>
<dbReference type="InterPro" id="IPR045806">
    <property type="entry name" value="BAMBI_C"/>
</dbReference>
<dbReference type="InterPro" id="IPR045807">
    <property type="entry name" value="BAMBI_N"/>
</dbReference>
<dbReference type="InterPro" id="IPR045860">
    <property type="entry name" value="Snake_toxin-like_sf"/>
</dbReference>
<dbReference type="PANTHER" id="PTHR15505:SF1">
    <property type="entry name" value="BMP AND ACTIVIN MEMBRANE-BOUND INHIBITOR HOMOLOG"/>
    <property type="match status" value="1"/>
</dbReference>
<dbReference type="PANTHER" id="PTHR15505">
    <property type="entry name" value="RIIA DOMAIN-CONTAINING PROTEIN 1"/>
    <property type="match status" value="1"/>
</dbReference>
<dbReference type="Pfam" id="PF06211">
    <property type="entry name" value="BAMBI"/>
    <property type="match status" value="1"/>
</dbReference>
<dbReference type="Pfam" id="PF19337">
    <property type="entry name" value="BAMBI_C"/>
    <property type="match status" value="1"/>
</dbReference>
<dbReference type="PIRSF" id="PIRSF037456">
    <property type="entry name" value="BAMBI"/>
    <property type="match status" value="1"/>
</dbReference>
<dbReference type="SUPFAM" id="SSF57302">
    <property type="entry name" value="Snake toxin-like"/>
    <property type="match status" value="1"/>
</dbReference>
<evidence type="ECO:0000255" key="1"/>
<evidence type="ECO:0000269" key="2">
    <source>
    </source>
</evidence>
<evidence type="ECO:0000305" key="3"/>
<accession>Q91XN4</accession>
<keyword id="KW-0325">Glycoprotein</keyword>
<keyword id="KW-0472">Membrane</keyword>
<keyword id="KW-1185">Reference proteome</keyword>
<keyword id="KW-0732">Signal</keyword>
<keyword id="KW-0812">Transmembrane</keyword>
<keyword id="KW-1133">Transmembrane helix</keyword>
<proteinExistence type="evidence at transcript level"/>
<gene>
    <name type="primary">Bambi</name>
</gene>
<organism>
    <name type="scientific">Rattus norvegicus</name>
    <name type="common">Rat</name>
    <dbReference type="NCBI Taxonomy" id="10116"/>
    <lineage>
        <taxon>Eukaryota</taxon>
        <taxon>Metazoa</taxon>
        <taxon>Chordata</taxon>
        <taxon>Craniata</taxon>
        <taxon>Vertebrata</taxon>
        <taxon>Euteleostomi</taxon>
        <taxon>Mammalia</taxon>
        <taxon>Eutheria</taxon>
        <taxon>Euarchontoglires</taxon>
        <taxon>Glires</taxon>
        <taxon>Rodentia</taxon>
        <taxon>Myomorpha</taxon>
        <taxon>Muroidea</taxon>
        <taxon>Muridae</taxon>
        <taxon>Murinae</taxon>
        <taxon>Rattus</taxon>
    </lineage>
</organism>
<reference key="1">
    <citation type="journal article" date="2003" name="Endocrinology">
        <title>Expression of Bambi is widespread in juvenile and adult rat tissues and is regulated in male germ cells.</title>
        <authorList>
            <person name="Loveland K.L."/>
            <person name="Bakker M."/>
            <person name="Meehan T."/>
            <person name="Christy E."/>
            <person name="von Schonfeldt V."/>
            <person name="Drummond A."/>
            <person name="de Kretser D."/>
        </authorList>
    </citation>
    <scope>NUCLEOTIDE SEQUENCE [MRNA]</scope>
    <scope>TISSUE SPECIFICITY</scope>
    <source>
        <strain>Sprague-Dawley</strain>
        <tissue>Testis</tissue>
    </source>
</reference>
<reference key="2">
    <citation type="journal article" date="2004" name="Genome Res.">
        <title>The status, quality, and expansion of the NIH full-length cDNA project: the Mammalian Gene Collection (MGC).</title>
        <authorList>
            <consortium name="The MGC Project Team"/>
        </authorList>
    </citation>
    <scope>NUCLEOTIDE SEQUENCE [LARGE SCALE MRNA]</scope>
    <source>
        <tissue>Lung</tissue>
    </source>
</reference>